<accession>B0RS35</accession>
<protein>
    <recommendedName>
        <fullName evidence="1">Ethanolamine ammonia-lyase small subunit</fullName>
        <shortName evidence="1">EAL small subunit</shortName>
        <ecNumber evidence="1">4.3.1.7</ecNumber>
    </recommendedName>
</protein>
<feature type="chain" id="PRO_1000130105" description="Ethanolamine ammonia-lyase small subunit">
    <location>
        <begin position="1"/>
        <end position="272"/>
    </location>
</feature>
<feature type="binding site" evidence="1">
    <location>
        <position position="161"/>
    </location>
    <ligand>
        <name>adenosylcob(III)alamin</name>
        <dbReference type="ChEBI" id="CHEBI:18408"/>
    </ligand>
</feature>
<feature type="binding site" evidence="1">
    <location>
        <position position="182"/>
    </location>
    <ligand>
        <name>adenosylcob(III)alamin</name>
        <dbReference type="ChEBI" id="CHEBI:18408"/>
    </ligand>
</feature>
<feature type="binding site" evidence="1">
    <location>
        <position position="211"/>
    </location>
    <ligand>
        <name>adenosylcob(III)alamin</name>
        <dbReference type="ChEBI" id="CHEBI:18408"/>
    </ligand>
</feature>
<comment type="function">
    <text evidence="1">Catalyzes the deamination of various vicinal amino-alcohols to oxo compounds. Allows this organism to utilize ethanolamine as the sole source of nitrogen and carbon in the presence of external vitamin B12.</text>
</comment>
<comment type="catalytic activity">
    <reaction evidence="1">
        <text>ethanolamine = acetaldehyde + NH4(+)</text>
        <dbReference type="Rhea" id="RHEA:15313"/>
        <dbReference type="ChEBI" id="CHEBI:15343"/>
        <dbReference type="ChEBI" id="CHEBI:28938"/>
        <dbReference type="ChEBI" id="CHEBI:57603"/>
        <dbReference type="EC" id="4.3.1.7"/>
    </reaction>
</comment>
<comment type="cofactor">
    <cofactor evidence="1">
        <name>adenosylcob(III)alamin</name>
        <dbReference type="ChEBI" id="CHEBI:18408"/>
    </cofactor>
    <text evidence="1">Binds between the large and small subunits.</text>
</comment>
<comment type="pathway">
    <text evidence="1">Amine and polyamine degradation; ethanolamine degradation.</text>
</comment>
<comment type="subunit">
    <text evidence="1">The basic unit is a heterodimer which dimerizes to form tetramers. The heterotetramers trimerize; 6 large subunits form a core ring with 6 small subunits projecting outwards.</text>
</comment>
<comment type="subcellular location">
    <subcellularLocation>
        <location evidence="1">Bacterial microcompartment</location>
    </subcellularLocation>
</comment>
<comment type="similarity">
    <text evidence="1">Belongs to the EutC family.</text>
</comment>
<proteinExistence type="inferred from homology"/>
<gene>
    <name evidence="1" type="primary">eutC</name>
    <name type="ordered locus">xcc-b100_1917</name>
</gene>
<dbReference type="EC" id="4.3.1.7" evidence="1"/>
<dbReference type="EMBL" id="AM920689">
    <property type="protein sequence ID" value="CAP51270.1"/>
    <property type="molecule type" value="Genomic_DNA"/>
</dbReference>
<dbReference type="SMR" id="B0RS35"/>
<dbReference type="KEGG" id="xca:xcc-b100_1917"/>
<dbReference type="HOGENOM" id="CLU_068224_1_0_6"/>
<dbReference type="UniPathway" id="UPA00560"/>
<dbReference type="Proteomes" id="UP000001188">
    <property type="component" value="Chromosome"/>
</dbReference>
<dbReference type="GO" id="GO:0009350">
    <property type="term" value="C:ethanolamine ammonia-lyase complex"/>
    <property type="evidence" value="ECO:0007669"/>
    <property type="project" value="UniProtKB-UniRule"/>
</dbReference>
<dbReference type="GO" id="GO:0031471">
    <property type="term" value="C:ethanolamine degradation polyhedral organelle"/>
    <property type="evidence" value="ECO:0007669"/>
    <property type="project" value="UniProtKB-UniRule"/>
</dbReference>
<dbReference type="GO" id="GO:0031419">
    <property type="term" value="F:cobalamin binding"/>
    <property type="evidence" value="ECO:0007669"/>
    <property type="project" value="UniProtKB-UniRule"/>
</dbReference>
<dbReference type="GO" id="GO:0008851">
    <property type="term" value="F:ethanolamine ammonia-lyase activity"/>
    <property type="evidence" value="ECO:0007669"/>
    <property type="project" value="UniProtKB-UniRule"/>
</dbReference>
<dbReference type="GO" id="GO:0006520">
    <property type="term" value="P:amino acid metabolic process"/>
    <property type="evidence" value="ECO:0007669"/>
    <property type="project" value="InterPro"/>
</dbReference>
<dbReference type="GO" id="GO:0046336">
    <property type="term" value="P:ethanolamine catabolic process"/>
    <property type="evidence" value="ECO:0007669"/>
    <property type="project" value="UniProtKB-UniRule"/>
</dbReference>
<dbReference type="FunFam" id="3.40.50.11240:FF:000001">
    <property type="entry name" value="Ethanolamine ammonia-lyase light chain"/>
    <property type="match status" value="1"/>
</dbReference>
<dbReference type="Gene3D" id="3.40.50.11240">
    <property type="entry name" value="Ethanolamine ammonia-lyase light chain (EutC)"/>
    <property type="match status" value="1"/>
</dbReference>
<dbReference type="Gene3D" id="1.10.30.40">
    <property type="entry name" value="Ethanolamine ammonia-lyase light chain (EutC), N-terminal domain"/>
    <property type="match status" value="1"/>
</dbReference>
<dbReference type="HAMAP" id="MF_00601">
    <property type="entry name" value="EutC"/>
    <property type="match status" value="1"/>
</dbReference>
<dbReference type="InterPro" id="IPR009246">
    <property type="entry name" value="EutC"/>
</dbReference>
<dbReference type="InterPro" id="IPR042251">
    <property type="entry name" value="EutC_C"/>
</dbReference>
<dbReference type="InterPro" id="IPR042255">
    <property type="entry name" value="EutC_N"/>
</dbReference>
<dbReference type="NCBIfam" id="NF003971">
    <property type="entry name" value="PRK05465.1"/>
    <property type="match status" value="1"/>
</dbReference>
<dbReference type="PANTHER" id="PTHR39330">
    <property type="entry name" value="ETHANOLAMINE AMMONIA-LYASE LIGHT CHAIN"/>
    <property type="match status" value="1"/>
</dbReference>
<dbReference type="PANTHER" id="PTHR39330:SF1">
    <property type="entry name" value="ETHANOLAMINE AMMONIA-LYASE SMALL SUBUNIT"/>
    <property type="match status" value="1"/>
</dbReference>
<dbReference type="Pfam" id="PF05985">
    <property type="entry name" value="EutC"/>
    <property type="match status" value="1"/>
</dbReference>
<dbReference type="PIRSF" id="PIRSF018982">
    <property type="entry name" value="EutC"/>
    <property type="match status" value="1"/>
</dbReference>
<organism>
    <name type="scientific">Xanthomonas campestris pv. campestris (strain B100)</name>
    <dbReference type="NCBI Taxonomy" id="509169"/>
    <lineage>
        <taxon>Bacteria</taxon>
        <taxon>Pseudomonadati</taxon>
        <taxon>Pseudomonadota</taxon>
        <taxon>Gammaproteobacteria</taxon>
        <taxon>Lysobacterales</taxon>
        <taxon>Lysobacteraceae</taxon>
        <taxon>Xanthomonas</taxon>
    </lineage>
</organism>
<name>EUTC_XANCB</name>
<evidence type="ECO:0000255" key="1">
    <source>
        <dbReference type="HAMAP-Rule" id="MF_00601"/>
    </source>
</evidence>
<reference key="1">
    <citation type="journal article" date="2008" name="J. Biotechnol.">
        <title>The genome of Xanthomonas campestris pv. campestris B100 and its use for the reconstruction of metabolic pathways involved in xanthan biosynthesis.</title>
        <authorList>
            <person name="Vorhoelter F.-J."/>
            <person name="Schneiker S."/>
            <person name="Goesmann A."/>
            <person name="Krause L."/>
            <person name="Bekel T."/>
            <person name="Kaiser O."/>
            <person name="Linke B."/>
            <person name="Patschkowski T."/>
            <person name="Rueckert C."/>
            <person name="Schmid J."/>
            <person name="Sidhu V.K."/>
            <person name="Sieber V."/>
            <person name="Tauch A."/>
            <person name="Watt S.A."/>
            <person name="Weisshaar B."/>
            <person name="Becker A."/>
            <person name="Niehaus K."/>
            <person name="Puehler A."/>
        </authorList>
    </citation>
    <scope>NUCLEOTIDE SEQUENCE [LARGE SCALE GENOMIC DNA]</scope>
    <source>
        <strain>B100</strain>
    </source>
</reference>
<keyword id="KW-1283">Bacterial microcompartment</keyword>
<keyword id="KW-0846">Cobalamin</keyword>
<keyword id="KW-0170">Cobalt</keyword>
<keyword id="KW-0456">Lyase</keyword>
<sequence length="272" mass="28960">MSTPTTPPRDAWARLRALTPARIALGRAGTSLPTASHLEFQLAHAQARDAVHLAFDPAPLQAVLQQRGRRSVLLHSAASDRHLYLQRPDLGRRLSDEAAEQLRGTTAVHGGGADLAVVVADGLSALAVHRHAGAMLEHIDALAAHEGWSLAPVTLIAQGRVAIGDEVGELLQAQAVIVLIGERPGLSSPDSLGLYLTYAPRVGHTDAARNCISNIRGEGLSYAEAGHKLGYLLREAFRRKLSGVQLKDEADRPLLGTDTASQAAPRNFLLPE</sequence>